<feature type="chain" id="PRO_0000306595" description="Small ribosomal subunit protein uS13">
    <location>
        <begin position="1"/>
        <end position="123"/>
    </location>
</feature>
<feature type="region of interest" description="Disordered" evidence="2">
    <location>
        <begin position="95"/>
        <end position="123"/>
    </location>
</feature>
<protein>
    <recommendedName>
        <fullName evidence="1">Small ribosomal subunit protein uS13</fullName>
    </recommendedName>
    <alternativeName>
        <fullName evidence="3">30S ribosomal protein S13</fullName>
    </alternativeName>
</protein>
<gene>
    <name evidence="1" type="primary">rpsM</name>
    <name type="ordered locus">DSY0496</name>
</gene>
<name>RS13_DESHY</name>
<reference key="1">
    <citation type="journal article" date="2006" name="J. Bacteriol.">
        <title>Complete genome sequence of the dehalorespiring bacterium Desulfitobacterium hafniense Y51 and comparison with Dehalococcoides ethenogenes 195.</title>
        <authorList>
            <person name="Nonaka H."/>
            <person name="Keresztes G."/>
            <person name="Shinoda Y."/>
            <person name="Ikenaga Y."/>
            <person name="Abe M."/>
            <person name="Naito K."/>
            <person name="Inatomi K."/>
            <person name="Furukawa K."/>
            <person name="Inui M."/>
            <person name="Yukawa H."/>
        </authorList>
    </citation>
    <scope>NUCLEOTIDE SEQUENCE [LARGE SCALE GENOMIC DNA]</scope>
    <source>
        <strain>Y51</strain>
    </source>
</reference>
<keyword id="KW-1185">Reference proteome</keyword>
<keyword id="KW-0687">Ribonucleoprotein</keyword>
<keyword id="KW-0689">Ribosomal protein</keyword>
<keyword id="KW-0694">RNA-binding</keyword>
<keyword id="KW-0699">rRNA-binding</keyword>
<keyword id="KW-0820">tRNA-binding</keyword>
<accession>Q250K7</accession>
<comment type="function">
    <text evidence="1">Located at the top of the head of the 30S subunit, it contacts several helices of the 16S rRNA. In the 70S ribosome it contacts the 23S rRNA (bridge B1a) and protein L5 of the 50S subunit (bridge B1b), connecting the 2 subunits; these bridges are implicated in subunit movement. Contacts the tRNAs in the A and P-sites.</text>
</comment>
<comment type="subunit">
    <text evidence="1">Part of the 30S ribosomal subunit. Forms a loose heterodimer with protein S19. Forms two bridges to the 50S subunit in the 70S ribosome.</text>
</comment>
<comment type="similarity">
    <text evidence="1">Belongs to the universal ribosomal protein uS13 family.</text>
</comment>
<evidence type="ECO:0000255" key="1">
    <source>
        <dbReference type="HAMAP-Rule" id="MF_01315"/>
    </source>
</evidence>
<evidence type="ECO:0000256" key="2">
    <source>
        <dbReference type="SAM" id="MobiDB-lite"/>
    </source>
</evidence>
<evidence type="ECO:0000305" key="3"/>
<dbReference type="EMBL" id="AP008230">
    <property type="protein sequence ID" value="BAE82285.1"/>
    <property type="molecule type" value="Genomic_DNA"/>
</dbReference>
<dbReference type="RefSeq" id="WP_005810116.1">
    <property type="nucleotide sequence ID" value="NC_007907.1"/>
</dbReference>
<dbReference type="SMR" id="Q250K7"/>
<dbReference type="STRING" id="138119.DSY0496"/>
<dbReference type="KEGG" id="dsy:DSY0496"/>
<dbReference type="eggNOG" id="COG0099">
    <property type="taxonomic scope" value="Bacteria"/>
</dbReference>
<dbReference type="HOGENOM" id="CLU_103849_1_2_9"/>
<dbReference type="Proteomes" id="UP000001946">
    <property type="component" value="Chromosome"/>
</dbReference>
<dbReference type="GO" id="GO:0005829">
    <property type="term" value="C:cytosol"/>
    <property type="evidence" value="ECO:0007669"/>
    <property type="project" value="TreeGrafter"/>
</dbReference>
<dbReference type="GO" id="GO:0015935">
    <property type="term" value="C:small ribosomal subunit"/>
    <property type="evidence" value="ECO:0007669"/>
    <property type="project" value="TreeGrafter"/>
</dbReference>
<dbReference type="GO" id="GO:0019843">
    <property type="term" value="F:rRNA binding"/>
    <property type="evidence" value="ECO:0007669"/>
    <property type="project" value="UniProtKB-UniRule"/>
</dbReference>
<dbReference type="GO" id="GO:0003735">
    <property type="term" value="F:structural constituent of ribosome"/>
    <property type="evidence" value="ECO:0007669"/>
    <property type="project" value="InterPro"/>
</dbReference>
<dbReference type="GO" id="GO:0000049">
    <property type="term" value="F:tRNA binding"/>
    <property type="evidence" value="ECO:0007669"/>
    <property type="project" value="UniProtKB-UniRule"/>
</dbReference>
<dbReference type="GO" id="GO:0006412">
    <property type="term" value="P:translation"/>
    <property type="evidence" value="ECO:0007669"/>
    <property type="project" value="UniProtKB-UniRule"/>
</dbReference>
<dbReference type="FunFam" id="1.10.8.50:FF:000001">
    <property type="entry name" value="30S ribosomal protein S13"/>
    <property type="match status" value="1"/>
</dbReference>
<dbReference type="FunFam" id="4.10.910.10:FF:000001">
    <property type="entry name" value="30S ribosomal protein S13"/>
    <property type="match status" value="1"/>
</dbReference>
<dbReference type="Gene3D" id="1.10.8.50">
    <property type="match status" value="1"/>
</dbReference>
<dbReference type="Gene3D" id="4.10.910.10">
    <property type="entry name" value="30s ribosomal protein s13, domain 2"/>
    <property type="match status" value="1"/>
</dbReference>
<dbReference type="HAMAP" id="MF_01315">
    <property type="entry name" value="Ribosomal_uS13"/>
    <property type="match status" value="1"/>
</dbReference>
<dbReference type="InterPro" id="IPR027437">
    <property type="entry name" value="Rbsml_uS13_C"/>
</dbReference>
<dbReference type="InterPro" id="IPR001892">
    <property type="entry name" value="Ribosomal_uS13"/>
</dbReference>
<dbReference type="InterPro" id="IPR010979">
    <property type="entry name" value="Ribosomal_uS13-like_H2TH"/>
</dbReference>
<dbReference type="InterPro" id="IPR019980">
    <property type="entry name" value="Ribosomal_uS13_bac-type"/>
</dbReference>
<dbReference type="InterPro" id="IPR018269">
    <property type="entry name" value="Ribosomal_uS13_CS"/>
</dbReference>
<dbReference type="NCBIfam" id="TIGR03631">
    <property type="entry name" value="uS13_bact"/>
    <property type="match status" value="1"/>
</dbReference>
<dbReference type="PANTHER" id="PTHR10871">
    <property type="entry name" value="30S RIBOSOMAL PROTEIN S13/40S RIBOSOMAL PROTEIN S18"/>
    <property type="match status" value="1"/>
</dbReference>
<dbReference type="PANTHER" id="PTHR10871:SF1">
    <property type="entry name" value="SMALL RIBOSOMAL SUBUNIT PROTEIN US13M"/>
    <property type="match status" value="1"/>
</dbReference>
<dbReference type="Pfam" id="PF00416">
    <property type="entry name" value="Ribosomal_S13"/>
    <property type="match status" value="1"/>
</dbReference>
<dbReference type="PIRSF" id="PIRSF002134">
    <property type="entry name" value="Ribosomal_S13"/>
    <property type="match status" value="1"/>
</dbReference>
<dbReference type="SUPFAM" id="SSF46946">
    <property type="entry name" value="S13-like H2TH domain"/>
    <property type="match status" value="1"/>
</dbReference>
<dbReference type="PROSITE" id="PS00646">
    <property type="entry name" value="RIBOSOMAL_S13_1"/>
    <property type="match status" value="1"/>
</dbReference>
<dbReference type="PROSITE" id="PS50159">
    <property type="entry name" value="RIBOSOMAL_S13_2"/>
    <property type="match status" value="1"/>
</dbReference>
<proteinExistence type="inferred from homology"/>
<sequence length="123" mass="14085">MARIAGVDLPREKRVEVGLTYIYGIGLPTAQKILARTGVNPETRIRDLSEEEVNRLREVIDKEIKVEGDLRREVSLNIKRLMEIGCYRGLRHRRGLPVRGQRTKTNARTRKGPIKTVGAKRKK</sequence>
<organism>
    <name type="scientific">Desulfitobacterium hafniense (strain Y51)</name>
    <dbReference type="NCBI Taxonomy" id="138119"/>
    <lineage>
        <taxon>Bacteria</taxon>
        <taxon>Bacillati</taxon>
        <taxon>Bacillota</taxon>
        <taxon>Clostridia</taxon>
        <taxon>Eubacteriales</taxon>
        <taxon>Desulfitobacteriaceae</taxon>
        <taxon>Desulfitobacterium</taxon>
    </lineage>
</organism>